<evidence type="ECO:0000250" key="1"/>
<evidence type="ECO:0000250" key="2">
    <source>
        <dbReference type="UniProtKB" id="Q9H6D7"/>
    </source>
</evidence>
<evidence type="ECO:0000305" key="3"/>
<sequence length="363" mass="42197">MASGDFCAPGEGVEMLLQVCGKQFPPCALTEEDLIQNPRFSKLLLSLSQHVDESGLSLTLAKEQAQAWSEVRHRKTAWLRYEILQRVIQELLVDYYVKAQDTNLTSEDKKFHETLEQRLLVTELTQLSGPGQETELPPLLGLERTDLLELMPPSQDFVWMKARLQLEVEEQLKRKCFTLLCYHDPSSDTDGDTLKAAKVWTLTEVLVREKQQCLEAKSQQKEQLVLLEKKRTTYSQVLLRCLALLQRLLQEHRLQTKSELDRINAQYLELKCSAMILRLRMEELKVLSDTYSAEKVEMHRLIRDRLEGAIRLQEQDLEKSRLVLHTYEALGEDFESLVREYTQLRLAADNKRWALQELSKAQR</sequence>
<proteinExistence type="evidence at protein level"/>
<protein>
    <recommendedName>
        <fullName>HAUS augmin-like complex subunit 4</fullName>
    </recommendedName>
</protein>
<name>HAUS4_MOUSE</name>
<feature type="chain" id="PRO_0000089902" description="HAUS augmin-like complex subunit 4">
    <location>
        <begin position="1"/>
        <end position="363"/>
    </location>
</feature>
<feature type="sequence conflict" description="In Ref. 2; AAH04644/AAH11095." evidence="3" ref="2">
    <original>G</original>
    <variation>V</variation>
    <location>
        <position position="21"/>
    </location>
</feature>
<feature type="sequence conflict" description="In Ref. 2; AAH04644/AAH11095." evidence="3" ref="2">
    <original>Q</original>
    <variation>H</variation>
    <location>
        <position position="212"/>
    </location>
</feature>
<feature type="sequence conflict" description="In Ref. 2; AAH04644/AAH11095." evidence="3" ref="2">
    <original>S</original>
    <variation>N</variation>
    <location>
        <position position="292"/>
    </location>
</feature>
<comment type="function">
    <text evidence="1">Contributes to mitotic spindle assembly, maintenance of centrosome integrity and completion of cytokinesis as part of the HAUS augmin-like complex.</text>
</comment>
<comment type="subunit">
    <text evidence="2">Component of the HAUS augmin-like complex. The complex interacts with the gamma-tubulin ring complex and this interaction is required for spindle assembly (By similarity). Interacts with EML3 (phosphorylated at 'Thr-882') (By similarity).</text>
</comment>
<comment type="subcellular location">
    <subcellularLocation>
        <location evidence="2">Cytoplasm</location>
        <location evidence="2">Cytoskeleton</location>
        <location evidence="2">Microtubule organizing center</location>
        <location evidence="2">Centrosome</location>
    </subcellularLocation>
    <subcellularLocation>
        <location evidence="2">Cytoplasm</location>
        <location evidence="2">Cytoskeleton</location>
        <location evidence="2">Spindle</location>
    </subcellularLocation>
    <text evidence="2">Localizes to interphase centrosomes and to mitotic spindle microtubules.</text>
</comment>
<comment type="similarity">
    <text evidence="3">Belongs to the HAUS4 family.</text>
</comment>
<organism>
    <name type="scientific">Mus musculus</name>
    <name type="common">Mouse</name>
    <dbReference type="NCBI Taxonomy" id="10090"/>
    <lineage>
        <taxon>Eukaryota</taxon>
        <taxon>Metazoa</taxon>
        <taxon>Chordata</taxon>
        <taxon>Craniata</taxon>
        <taxon>Vertebrata</taxon>
        <taxon>Euteleostomi</taxon>
        <taxon>Mammalia</taxon>
        <taxon>Eutheria</taxon>
        <taxon>Euarchontoglires</taxon>
        <taxon>Glires</taxon>
        <taxon>Rodentia</taxon>
        <taxon>Myomorpha</taxon>
        <taxon>Muroidea</taxon>
        <taxon>Muridae</taxon>
        <taxon>Murinae</taxon>
        <taxon>Mus</taxon>
        <taxon>Mus</taxon>
    </lineage>
</organism>
<accession>Q8BFT2</accession>
<accession>Q99KI1</accession>
<dbReference type="EMBL" id="AK079161">
    <property type="protein sequence ID" value="BAC37564.1"/>
    <property type="molecule type" value="mRNA"/>
</dbReference>
<dbReference type="EMBL" id="AK079852">
    <property type="protein sequence ID" value="BAC37767.1"/>
    <property type="molecule type" value="mRNA"/>
</dbReference>
<dbReference type="EMBL" id="BC004644">
    <property type="protein sequence ID" value="AAH04644.1"/>
    <property type="molecule type" value="mRNA"/>
</dbReference>
<dbReference type="EMBL" id="BC011095">
    <property type="protein sequence ID" value="AAH11095.1"/>
    <property type="molecule type" value="mRNA"/>
</dbReference>
<dbReference type="CCDS" id="CCDS27092.1"/>
<dbReference type="RefSeq" id="NP_663437.2">
    <property type="nucleotide sequence ID" value="NM_145462.2"/>
</dbReference>
<dbReference type="RefSeq" id="XP_006518908.1">
    <property type="nucleotide sequence ID" value="XM_006518845.5"/>
</dbReference>
<dbReference type="SMR" id="Q8BFT2"/>
<dbReference type="BioGRID" id="230105">
    <property type="interactions" value="33"/>
</dbReference>
<dbReference type="FunCoup" id="Q8BFT2">
    <property type="interactions" value="503"/>
</dbReference>
<dbReference type="IntAct" id="Q8BFT2">
    <property type="interactions" value="29"/>
</dbReference>
<dbReference type="STRING" id="10090.ENSMUSP00000022784"/>
<dbReference type="PhosphoSitePlus" id="Q8BFT2"/>
<dbReference type="SwissPalm" id="Q8BFT2"/>
<dbReference type="PaxDb" id="10090-ENSMUSP00000022784"/>
<dbReference type="PeptideAtlas" id="Q8BFT2"/>
<dbReference type="ProteomicsDB" id="270889"/>
<dbReference type="Pumba" id="Q8BFT2"/>
<dbReference type="Ensembl" id="ENSMUST00000022784.9">
    <property type="protein sequence ID" value="ENSMUSP00000022784.9"/>
    <property type="gene ID" value="ENSMUSG00000022177.10"/>
</dbReference>
<dbReference type="GeneID" id="219072"/>
<dbReference type="KEGG" id="mmu:219072"/>
<dbReference type="UCSC" id="uc007twh.2">
    <property type="organism name" value="mouse"/>
</dbReference>
<dbReference type="AGR" id="MGI:1261794"/>
<dbReference type="CTD" id="54930"/>
<dbReference type="MGI" id="MGI:1261794">
    <property type="gene designation" value="Haus4"/>
</dbReference>
<dbReference type="VEuPathDB" id="HostDB:ENSMUSG00000022177"/>
<dbReference type="eggNOG" id="ENOG502QW4I">
    <property type="taxonomic scope" value="Eukaryota"/>
</dbReference>
<dbReference type="GeneTree" id="ENSGT00390000014634"/>
<dbReference type="HOGENOM" id="CLU_065166_0_0_1"/>
<dbReference type="InParanoid" id="Q8BFT2"/>
<dbReference type="OMA" id="NWALKEF"/>
<dbReference type="OrthoDB" id="661220at2759"/>
<dbReference type="PhylomeDB" id="Q8BFT2"/>
<dbReference type="TreeFam" id="TF330353"/>
<dbReference type="Reactome" id="R-MMU-2565942">
    <property type="pathway name" value="Regulation of PLK1 Activity at G2/M Transition"/>
</dbReference>
<dbReference type="Reactome" id="R-MMU-380259">
    <property type="pathway name" value="Loss of Nlp from mitotic centrosomes"/>
</dbReference>
<dbReference type="Reactome" id="R-MMU-380270">
    <property type="pathway name" value="Recruitment of mitotic centrosome proteins and complexes"/>
</dbReference>
<dbReference type="Reactome" id="R-MMU-380284">
    <property type="pathway name" value="Loss of proteins required for interphase microtubule organization from the centrosome"/>
</dbReference>
<dbReference type="Reactome" id="R-MMU-380320">
    <property type="pathway name" value="Recruitment of NuMA to mitotic centrosomes"/>
</dbReference>
<dbReference type="Reactome" id="R-MMU-5620912">
    <property type="pathway name" value="Anchoring of the basal body to the plasma membrane"/>
</dbReference>
<dbReference type="Reactome" id="R-MMU-8854518">
    <property type="pathway name" value="AURKA Activation by TPX2"/>
</dbReference>
<dbReference type="BioGRID-ORCS" id="219072">
    <property type="hits" value="23 hits in 79 CRISPR screens"/>
</dbReference>
<dbReference type="ChiTaRS" id="Haus4">
    <property type="organism name" value="mouse"/>
</dbReference>
<dbReference type="PRO" id="PR:Q8BFT2"/>
<dbReference type="Proteomes" id="UP000000589">
    <property type="component" value="Chromosome 14"/>
</dbReference>
<dbReference type="RNAct" id="Q8BFT2">
    <property type="molecule type" value="protein"/>
</dbReference>
<dbReference type="Bgee" id="ENSMUSG00000022177">
    <property type="expression patterns" value="Expressed in seminiferous tubule of testis and 286 other cell types or tissues"/>
</dbReference>
<dbReference type="ExpressionAtlas" id="Q8BFT2">
    <property type="expression patterns" value="baseline and differential"/>
</dbReference>
<dbReference type="GO" id="GO:0005813">
    <property type="term" value="C:centrosome"/>
    <property type="evidence" value="ECO:0007669"/>
    <property type="project" value="UniProtKB-SubCell"/>
</dbReference>
<dbReference type="GO" id="GO:0005737">
    <property type="term" value="C:cytoplasm"/>
    <property type="evidence" value="ECO:0007669"/>
    <property type="project" value="UniProtKB-KW"/>
</dbReference>
<dbReference type="GO" id="GO:0070652">
    <property type="term" value="C:HAUS complex"/>
    <property type="evidence" value="ECO:0000250"/>
    <property type="project" value="UniProtKB"/>
</dbReference>
<dbReference type="GO" id="GO:1990498">
    <property type="term" value="C:mitotic spindle microtubule"/>
    <property type="evidence" value="ECO:0000250"/>
    <property type="project" value="UniProtKB"/>
</dbReference>
<dbReference type="GO" id="GO:0051301">
    <property type="term" value="P:cell division"/>
    <property type="evidence" value="ECO:0007669"/>
    <property type="project" value="UniProtKB-KW"/>
</dbReference>
<dbReference type="GO" id="GO:0007098">
    <property type="term" value="P:centrosome cycle"/>
    <property type="evidence" value="ECO:0000250"/>
    <property type="project" value="UniProtKB"/>
</dbReference>
<dbReference type="GO" id="GO:0051225">
    <property type="term" value="P:spindle assembly"/>
    <property type="evidence" value="ECO:0000250"/>
    <property type="project" value="UniProtKB"/>
</dbReference>
<dbReference type="InterPro" id="IPR029327">
    <property type="entry name" value="HAUS4"/>
</dbReference>
<dbReference type="InterPro" id="IPR026214">
    <property type="entry name" value="HAUS4_met"/>
</dbReference>
<dbReference type="PANTHER" id="PTHR16219">
    <property type="entry name" value="AUGMIN SUBUNIT 4 FAMILY MEMBER"/>
    <property type="match status" value="1"/>
</dbReference>
<dbReference type="PANTHER" id="PTHR16219:SF1">
    <property type="entry name" value="HAUS AUGMIN-LIKE COMPLEX SUBUNIT 4"/>
    <property type="match status" value="1"/>
</dbReference>
<dbReference type="Pfam" id="PF14735">
    <property type="entry name" value="HAUS4"/>
    <property type="match status" value="1"/>
</dbReference>
<dbReference type="PRINTS" id="PR02090">
    <property type="entry name" value="HAUSAUGMINL4"/>
</dbReference>
<gene>
    <name type="primary">Haus4</name>
    <name type="synonym">D14Ertd500e</name>
</gene>
<reference key="1">
    <citation type="journal article" date="2005" name="Science">
        <title>The transcriptional landscape of the mammalian genome.</title>
        <authorList>
            <person name="Carninci P."/>
            <person name="Kasukawa T."/>
            <person name="Katayama S."/>
            <person name="Gough J."/>
            <person name="Frith M.C."/>
            <person name="Maeda N."/>
            <person name="Oyama R."/>
            <person name="Ravasi T."/>
            <person name="Lenhard B."/>
            <person name="Wells C."/>
            <person name="Kodzius R."/>
            <person name="Shimokawa K."/>
            <person name="Bajic V.B."/>
            <person name="Brenner S.E."/>
            <person name="Batalov S."/>
            <person name="Forrest A.R."/>
            <person name="Zavolan M."/>
            <person name="Davis M.J."/>
            <person name="Wilming L.G."/>
            <person name="Aidinis V."/>
            <person name="Allen J.E."/>
            <person name="Ambesi-Impiombato A."/>
            <person name="Apweiler R."/>
            <person name="Aturaliya R.N."/>
            <person name="Bailey T.L."/>
            <person name="Bansal M."/>
            <person name="Baxter L."/>
            <person name="Beisel K.W."/>
            <person name="Bersano T."/>
            <person name="Bono H."/>
            <person name="Chalk A.M."/>
            <person name="Chiu K.P."/>
            <person name="Choudhary V."/>
            <person name="Christoffels A."/>
            <person name="Clutterbuck D.R."/>
            <person name="Crowe M.L."/>
            <person name="Dalla E."/>
            <person name="Dalrymple B.P."/>
            <person name="de Bono B."/>
            <person name="Della Gatta G."/>
            <person name="di Bernardo D."/>
            <person name="Down T."/>
            <person name="Engstrom P."/>
            <person name="Fagiolini M."/>
            <person name="Faulkner G."/>
            <person name="Fletcher C.F."/>
            <person name="Fukushima T."/>
            <person name="Furuno M."/>
            <person name="Futaki S."/>
            <person name="Gariboldi M."/>
            <person name="Georgii-Hemming P."/>
            <person name="Gingeras T.R."/>
            <person name="Gojobori T."/>
            <person name="Green R.E."/>
            <person name="Gustincich S."/>
            <person name="Harbers M."/>
            <person name="Hayashi Y."/>
            <person name="Hensch T.K."/>
            <person name="Hirokawa N."/>
            <person name="Hill D."/>
            <person name="Huminiecki L."/>
            <person name="Iacono M."/>
            <person name="Ikeo K."/>
            <person name="Iwama A."/>
            <person name="Ishikawa T."/>
            <person name="Jakt M."/>
            <person name="Kanapin A."/>
            <person name="Katoh M."/>
            <person name="Kawasawa Y."/>
            <person name="Kelso J."/>
            <person name="Kitamura H."/>
            <person name="Kitano H."/>
            <person name="Kollias G."/>
            <person name="Krishnan S.P."/>
            <person name="Kruger A."/>
            <person name="Kummerfeld S.K."/>
            <person name="Kurochkin I.V."/>
            <person name="Lareau L.F."/>
            <person name="Lazarevic D."/>
            <person name="Lipovich L."/>
            <person name="Liu J."/>
            <person name="Liuni S."/>
            <person name="McWilliam S."/>
            <person name="Madan Babu M."/>
            <person name="Madera M."/>
            <person name="Marchionni L."/>
            <person name="Matsuda H."/>
            <person name="Matsuzawa S."/>
            <person name="Miki H."/>
            <person name="Mignone F."/>
            <person name="Miyake S."/>
            <person name="Morris K."/>
            <person name="Mottagui-Tabar S."/>
            <person name="Mulder N."/>
            <person name="Nakano N."/>
            <person name="Nakauchi H."/>
            <person name="Ng P."/>
            <person name="Nilsson R."/>
            <person name="Nishiguchi S."/>
            <person name="Nishikawa S."/>
            <person name="Nori F."/>
            <person name="Ohara O."/>
            <person name="Okazaki Y."/>
            <person name="Orlando V."/>
            <person name="Pang K.C."/>
            <person name="Pavan W.J."/>
            <person name="Pavesi G."/>
            <person name="Pesole G."/>
            <person name="Petrovsky N."/>
            <person name="Piazza S."/>
            <person name="Reed J."/>
            <person name="Reid J.F."/>
            <person name="Ring B.Z."/>
            <person name="Ringwald M."/>
            <person name="Rost B."/>
            <person name="Ruan Y."/>
            <person name="Salzberg S.L."/>
            <person name="Sandelin A."/>
            <person name="Schneider C."/>
            <person name="Schoenbach C."/>
            <person name="Sekiguchi K."/>
            <person name="Semple C.A."/>
            <person name="Seno S."/>
            <person name="Sessa L."/>
            <person name="Sheng Y."/>
            <person name="Shibata Y."/>
            <person name="Shimada H."/>
            <person name="Shimada K."/>
            <person name="Silva D."/>
            <person name="Sinclair B."/>
            <person name="Sperling S."/>
            <person name="Stupka E."/>
            <person name="Sugiura K."/>
            <person name="Sultana R."/>
            <person name="Takenaka Y."/>
            <person name="Taki K."/>
            <person name="Tammoja K."/>
            <person name="Tan S.L."/>
            <person name="Tang S."/>
            <person name="Taylor M.S."/>
            <person name="Tegner J."/>
            <person name="Teichmann S.A."/>
            <person name="Ueda H.R."/>
            <person name="van Nimwegen E."/>
            <person name="Verardo R."/>
            <person name="Wei C.L."/>
            <person name="Yagi K."/>
            <person name="Yamanishi H."/>
            <person name="Zabarovsky E."/>
            <person name="Zhu S."/>
            <person name="Zimmer A."/>
            <person name="Hide W."/>
            <person name="Bult C."/>
            <person name="Grimmond S.M."/>
            <person name="Teasdale R.D."/>
            <person name="Liu E.T."/>
            <person name="Brusic V."/>
            <person name="Quackenbush J."/>
            <person name="Wahlestedt C."/>
            <person name="Mattick J.S."/>
            <person name="Hume D.A."/>
            <person name="Kai C."/>
            <person name="Sasaki D."/>
            <person name="Tomaru Y."/>
            <person name="Fukuda S."/>
            <person name="Kanamori-Katayama M."/>
            <person name="Suzuki M."/>
            <person name="Aoki J."/>
            <person name="Arakawa T."/>
            <person name="Iida J."/>
            <person name="Imamura K."/>
            <person name="Itoh M."/>
            <person name="Kato T."/>
            <person name="Kawaji H."/>
            <person name="Kawagashira N."/>
            <person name="Kawashima T."/>
            <person name="Kojima M."/>
            <person name="Kondo S."/>
            <person name="Konno H."/>
            <person name="Nakano K."/>
            <person name="Ninomiya N."/>
            <person name="Nishio T."/>
            <person name="Okada M."/>
            <person name="Plessy C."/>
            <person name="Shibata K."/>
            <person name="Shiraki T."/>
            <person name="Suzuki S."/>
            <person name="Tagami M."/>
            <person name="Waki K."/>
            <person name="Watahiki A."/>
            <person name="Okamura-Oho Y."/>
            <person name="Suzuki H."/>
            <person name="Kawai J."/>
            <person name="Hayashizaki Y."/>
        </authorList>
    </citation>
    <scope>NUCLEOTIDE SEQUENCE [LARGE SCALE MRNA]</scope>
    <source>
        <strain>C57BL/6J</strain>
        <tissue>Embryo</tissue>
        <tissue>Thymus</tissue>
    </source>
</reference>
<reference key="2">
    <citation type="journal article" date="2004" name="Genome Res.">
        <title>The status, quality, and expansion of the NIH full-length cDNA project: the Mammalian Gene Collection (MGC).</title>
        <authorList>
            <consortium name="The MGC Project Team"/>
        </authorList>
    </citation>
    <scope>NUCLEOTIDE SEQUENCE [LARGE SCALE MRNA]</scope>
    <source>
        <tissue>Mammary tumor</tissue>
    </source>
</reference>
<reference key="3">
    <citation type="journal article" date="2010" name="Cell">
        <title>A tissue-specific atlas of mouse protein phosphorylation and expression.</title>
        <authorList>
            <person name="Huttlin E.L."/>
            <person name="Jedrychowski M.P."/>
            <person name="Elias J.E."/>
            <person name="Goswami T."/>
            <person name="Rad R."/>
            <person name="Beausoleil S.A."/>
            <person name="Villen J."/>
            <person name="Haas W."/>
            <person name="Sowa M.E."/>
            <person name="Gygi S.P."/>
        </authorList>
    </citation>
    <scope>IDENTIFICATION BY MASS SPECTROMETRY [LARGE SCALE ANALYSIS]</scope>
    <source>
        <tissue>Spleen</tissue>
        <tissue>Testis</tissue>
    </source>
</reference>
<keyword id="KW-0131">Cell cycle</keyword>
<keyword id="KW-0132">Cell division</keyword>
<keyword id="KW-0963">Cytoplasm</keyword>
<keyword id="KW-0206">Cytoskeleton</keyword>
<keyword id="KW-0493">Microtubule</keyword>
<keyword id="KW-0498">Mitosis</keyword>
<keyword id="KW-1185">Reference proteome</keyword>